<evidence type="ECO:0000269" key="1">
    <source>
    </source>
</evidence>
<evidence type="ECO:0000269" key="2">
    <source>
    </source>
</evidence>
<evidence type="ECO:0000303" key="3">
    <source>
    </source>
</evidence>
<evidence type="ECO:0000305" key="4"/>
<evidence type="ECO:0007744" key="5">
    <source>
        <dbReference type="PDB" id="6CON"/>
    </source>
</evidence>
<evidence type="ECO:0007829" key="6">
    <source>
        <dbReference type="PDB" id="6CON"/>
    </source>
</evidence>
<name>IPDA_MYCTU</name>
<dbReference type="EC" id="4.1.99.-" evidence="2"/>
<dbReference type="EMBL" id="AL123456">
    <property type="protein sequence ID" value="CCP46373.1"/>
    <property type="molecule type" value="Genomic_DNA"/>
</dbReference>
<dbReference type="PIR" id="H70677">
    <property type="entry name" value="H70677"/>
</dbReference>
<dbReference type="RefSeq" id="NP_218068.1">
    <property type="nucleotide sequence ID" value="NC_000962.3"/>
</dbReference>
<dbReference type="RefSeq" id="WP_003900094.1">
    <property type="nucleotide sequence ID" value="NZ_NVQJ01000014.1"/>
</dbReference>
<dbReference type="PDB" id="6CON">
    <property type="method" value="X-ray"/>
    <property type="resolution" value="2.10 A"/>
    <property type="chains" value="A/C/E/G=1-292"/>
</dbReference>
<dbReference type="PDBsum" id="6CON"/>
<dbReference type="SMR" id="P9WPW1"/>
<dbReference type="STRING" id="83332.Rv3551"/>
<dbReference type="PaxDb" id="83332-Rv3551"/>
<dbReference type="DNASU" id="887235"/>
<dbReference type="GeneID" id="887235"/>
<dbReference type="KEGG" id="mtu:Rv3551"/>
<dbReference type="KEGG" id="mtv:RVBD_3551"/>
<dbReference type="TubercuList" id="Rv3551"/>
<dbReference type="eggNOG" id="COG1788">
    <property type="taxonomic scope" value="Bacteria"/>
</dbReference>
<dbReference type="InParanoid" id="P9WPW1"/>
<dbReference type="OrthoDB" id="3742129at2"/>
<dbReference type="PhylomeDB" id="P9WPW1"/>
<dbReference type="BioCyc" id="MetaCyc:G185E-7828-MONOMER"/>
<dbReference type="UniPathway" id="UPA01058"/>
<dbReference type="Proteomes" id="UP000001584">
    <property type="component" value="Chromosome"/>
</dbReference>
<dbReference type="GO" id="GO:0008410">
    <property type="term" value="F:CoA-transferase activity"/>
    <property type="evidence" value="ECO:0007669"/>
    <property type="project" value="InterPro"/>
</dbReference>
<dbReference type="GO" id="GO:0016829">
    <property type="term" value="F:lyase activity"/>
    <property type="evidence" value="ECO:0007669"/>
    <property type="project" value="UniProtKB-KW"/>
</dbReference>
<dbReference type="GO" id="GO:0051701">
    <property type="term" value="P:biological process involved in interaction with host"/>
    <property type="evidence" value="ECO:0000315"/>
    <property type="project" value="MTBBASE"/>
</dbReference>
<dbReference type="GO" id="GO:0006707">
    <property type="term" value="P:cholesterol catabolic process"/>
    <property type="evidence" value="ECO:0007669"/>
    <property type="project" value="UniProtKB-UniPathway"/>
</dbReference>
<dbReference type="Gene3D" id="3.30.30.40">
    <property type="match status" value="1"/>
</dbReference>
<dbReference type="Gene3D" id="3.40.1080.10">
    <property type="entry name" value="Glutaconate Coenzyme A-transferase"/>
    <property type="match status" value="1"/>
</dbReference>
<dbReference type="InterPro" id="IPR004165">
    <property type="entry name" value="CoA_trans_fam_I"/>
</dbReference>
<dbReference type="InterPro" id="IPR037171">
    <property type="entry name" value="NagB/RpiA_transferase-like"/>
</dbReference>
<dbReference type="Pfam" id="PF01144">
    <property type="entry name" value="CoA_trans"/>
    <property type="match status" value="1"/>
</dbReference>
<dbReference type="SMART" id="SM00882">
    <property type="entry name" value="CoA_trans"/>
    <property type="match status" value="1"/>
</dbReference>
<dbReference type="SUPFAM" id="SSF100950">
    <property type="entry name" value="NagB/RpiA/CoA transferase-like"/>
    <property type="match status" value="1"/>
</dbReference>
<feature type="chain" id="PRO_0000157928" description="Cholesterol ring-cleaving hydrolase IpdA subunit">
    <location>
        <begin position="1"/>
        <end position="292"/>
    </location>
</feature>
<feature type="helix" evidence="6">
    <location>
        <begin position="8"/>
        <end position="12"/>
    </location>
</feature>
<feature type="strand" evidence="6">
    <location>
        <begin position="20"/>
        <end position="23"/>
    </location>
</feature>
<feature type="helix" evidence="6">
    <location>
        <begin position="33"/>
        <end position="41"/>
    </location>
</feature>
<feature type="strand" evidence="6">
    <location>
        <begin position="46"/>
        <end position="54"/>
    </location>
</feature>
<feature type="helix" evidence="6">
    <location>
        <begin position="55"/>
        <end position="62"/>
    </location>
</feature>
<feature type="strand" evidence="6">
    <location>
        <begin position="66"/>
        <end position="74"/>
    </location>
</feature>
<feature type="helix" evidence="6">
    <location>
        <begin position="84"/>
        <end position="91"/>
    </location>
</feature>
<feature type="strand" evidence="6">
    <location>
        <begin position="95"/>
        <end position="99"/>
    </location>
</feature>
<feature type="helix" evidence="6">
    <location>
        <begin position="102"/>
        <end position="113"/>
    </location>
</feature>
<feature type="strand" evidence="6">
    <location>
        <begin position="117"/>
        <end position="122"/>
    </location>
</feature>
<feature type="turn" evidence="6">
    <location>
        <begin position="123"/>
        <end position="126"/>
    </location>
</feature>
<feature type="helix" evidence="6">
    <location>
        <begin position="129"/>
        <end position="132"/>
    </location>
</feature>
<feature type="turn" evidence="6">
    <location>
        <begin position="133"/>
        <end position="135"/>
    </location>
</feature>
<feature type="strand" evidence="6">
    <location>
        <begin position="139"/>
        <end position="141"/>
    </location>
</feature>
<feature type="strand" evidence="6">
    <location>
        <begin position="153"/>
        <end position="158"/>
    </location>
</feature>
<feature type="strand" evidence="6">
    <location>
        <begin position="162"/>
        <end position="172"/>
    </location>
</feature>
<feature type="helix" evidence="6">
    <location>
        <begin position="188"/>
        <end position="193"/>
    </location>
</feature>
<feature type="strand" evidence="6">
    <location>
        <begin position="195"/>
        <end position="205"/>
    </location>
</feature>
<feature type="helix" evidence="6">
    <location>
        <begin position="208"/>
        <end position="214"/>
    </location>
</feature>
<feature type="helix" evidence="6">
    <location>
        <begin position="217"/>
        <end position="219"/>
    </location>
</feature>
<feature type="helix" evidence="6">
    <location>
        <begin position="224"/>
        <end position="226"/>
    </location>
</feature>
<feature type="strand" evidence="6">
    <location>
        <begin position="228"/>
        <end position="232"/>
    </location>
</feature>
<feature type="turn" evidence="6">
    <location>
        <begin position="234"/>
        <end position="239"/>
    </location>
</feature>
<feature type="helix" evidence="6">
    <location>
        <begin position="250"/>
        <end position="260"/>
    </location>
</feature>
<feature type="helix" evidence="6">
    <location>
        <begin position="263"/>
        <end position="273"/>
    </location>
</feature>
<feature type="strand" evidence="6">
    <location>
        <begin position="274"/>
        <end position="276"/>
    </location>
</feature>
<feature type="helix" evidence="6">
    <location>
        <begin position="278"/>
        <end position="291"/>
    </location>
</feature>
<protein>
    <recommendedName>
        <fullName evidence="4">Cholesterol ring-cleaving hydrolase IpdA subunit</fullName>
        <ecNumber evidence="2">4.1.99.-</ecNumber>
    </recommendedName>
    <alternativeName>
        <fullName evidence="4">(3E)-2-(2-carboxylatoethyl)-3-methyl-6-oxocyclohex-1-ene-1-carboxyl-CoA hydrolase alpha subunit</fullName>
        <shortName evidence="4">COCHEA-CoA hydrolase alpha subunit</shortName>
    </alternativeName>
</protein>
<comment type="function">
    <text evidence="1 2">Involved in the final steps of cholesterol and steroid degradation (PubMed:28377529). Opens the last steroid ring of cholesterol by catalyzing the hydrolysis of (3E)-2-(2-carboxylatoethyl)-3-methyl-6-oxocyclohex-1-ene-1-carboxyl-CoA (COCHEA-CoA) to 6-methyl-3,7-dioxodecanedioyl-CoA (MeDODA-CoA) (PubMed:29581275).</text>
</comment>
<comment type="catalytic activity">
    <reaction evidence="2">
        <text>(3E)-2-(2-carboxylatoethyl)-3-methyl-6-oxocyclohex-1-ene-1-carboxyl-CoA + H2O = 6-methyl-3,7-dioxodecanedioyl-CoA</text>
        <dbReference type="Rhea" id="RHEA:66364"/>
        <dbReference type="ChEBI" id="CHEBI:15377"/>
        <dbReference type="ChEBI" id="CHEBI:167101"/>
        <dbReference type="ChEBI" id="CHEBI:167102"/>
    </reaction>
    <physiologicalReaction direction="left-to-right" evidence="2">
        <dbReference type="Rhea" id="RHEA:66365"/>
    </physiologicalReaction>
</comment>
<comment type="pathway">
    <text evidence="1">Steroid metabolism; cholesterol degradation.</text>
</comment>
<comment type="subunit">
    <text evidence="2">Heterotetramer composed of 2 IpdA subunits and 2 IpdB subunits.</text>
</comment>
<comment type="disruption phenotype">
    <text evidence="1">IpdAB double deletion mutant does not grow on cholesterol, but grows as the wild-type on glycerol. In the presence of cholesterol, ipdAB double deletion mutant accumulates COCHEA-CoA. Double mutant does not survive in macrophages and displays severely depleted CoASH levels that correlate with a cholesterol-dependent toxicity.</text>
</comment>
<comment type="similarity">
    <text evidence="4">Belongs to the 3-oxoacid CoA-transferase subunit A family.</text>
</comment>
<accession>P9WPW1</accession>
<accession>L0TCX1</accession>
<accession>P71850</accession>
<gene>
    <name evidence="3" type="primary">ipdA</name>
    <name type="ordered locus">Rv3551</name>
    <name type="ORF">MTCY03C7.05c</name>
</gene>
<sequence>MPDKRTALDDAVAQLRSGMTIGIAGWGSRRKPMAFVRAILRSDVTDLTVVTYGGPDLGLLCSAGKVKRVYYGFVSLDSPPFYDPWFAHARTSGAIEAREMDEGMLRCGLQAAAQRLPFLPIRAGLGSSVPQFWAGELQTVTSPYPAPGGGYETLIAMPALRLDAAFAHLNLGDSHGNAAYTGIDPYFDDLFLMAAERRFLSVERIVATEELVKSVPPQALLVNRMMVDAIVEAPGGAHFTTAAPDYGRDEQFQRHYAEAASTQVGWQQFVHTYLSGTEADYQAAVHNFGASR</sequence>
<reference key="1">
    <citation type="journal article" date="1998" name="Nature">
        <title>Deciphering the biology of Mycobacterium tuberculosis from the complete genome sequence.</title>
        <authorList>
            <person name="Cole S.T."/>
            <person name="Brosch R."/>
            <person name="Parkhill J."/>
            <person name="Garnier T."/>
            <person name="Churcher C.M."/>
            <person name="Harris D.E."/>
            <person name="Gordon S.V."/>
            <person name="Eiglmeier K."/>
            <person name="Gas S."/>
            <person name="Barry C.E. III"/>
            <person name="Tekaia F."/>
            <person name="Badcock K."/>
            <person name="Basham D."/>
            <person name="Brown D."/>
            <person name="Chillingworth T."/>
            <person name="Connor R."/>
            <person name="Davies R.M."/>
            <person name="Devlin K."/>
            <person name="Feltwell T."/>
            <person name="Gentles S."/>
            <person name="Hamlin N."/>
            <person name="Holroyd S."/>
            <person name="Hornsby T."/>
            <person name="Jagels K."/>
            <person name="Krogh A."/>
            <person name="McLean J."/>
            <person name="Moule S."/>
            <person name="Murphy L.D."/>
            <person name="Oliver S."/>
            <person name="Osborne J."/>
            <person name="Quail M.A."/>
            <person name="Rajandream M.A."/>
            <person name="Rogers J."/>
            <person name="Rutter S."/>
            <person name="Seeger K."/>
            <person name="Skelton S."/>
            <person name="Squares S."/>
            <person name="Squares R."/>
            <person name="Sulston J.E."/>
            <person name="Taylor K."/>
            <person name="Whitehead S."/>
            <person name="Barrell B.G."/>
        </authorList>
    </citation>
    <scope>NUCLEOTIDE SEQUENCE [LARGE SCALE GENOMIC DNA]</scope>
    <source>
        <strain>ATCC 25618 / H37Rv</strain>
    </source>
</reference>
<reference key="2">
    <citation type="journal article" date="2011" name="Mol. Cell. Proteomics">
        <title>Proteogenomic analysis of Mycobacterium tuberculosis by high resolution mass spectrometry.</title>
        <authorList>
            <person name="Kelkar D.S."/>
            <person name="Kumar D."/>
            <person name="Kumar P."/>
            <person name="Balakrishnan L."/>
            <person name="Muthusamy B."/>
            <person name="Yadav A.K."/>
            <person name="Shrivastava P."/>
            <person name="Marimuthu A."/>
            <person name="Anand S."/>
            <person name="Sundaram H."/>
            <person name="Kingsbury R."/>
            <person name="Harsha H.C."/>
            <person name="Nair B."/>
            <person name="Prasad T.S."/>
            <person name="Chauhan D.S."/>
            <person name="Katoch K."/>
            <person name="Katoch V.M."/>
            <person name="Kumar P."/>
            <person name="Chaerkady R."/>
            <person name="Ramachandran S."/>
            <person name="Dash D."/>
            <person name="Pandey A."/>
        </authorList>
    </citation>
    <scope>IDENTIFICATION BY MASS SPECTROMETRY [LARGE SCALE ANALYSIS]</scope>
    <source>
        <strain>ATCC 25618 / H37Rv</strain>
    </source>
</reference>
<reference key="3">
    <citation type="journal article" date="2017" name="MBio">
        <title>Catabolism of the last two steroid rings in Mycobacterium tuberculosis and other bacteria.</title>
        <authorList>
            <person name="Crowe A.M."/>
            <person name="Casabon I."/>
            <person name="Brown K.L."/>
            <person name="Liu J."/>
            <person name="Lian J."/>
            <person name="Rogalski J.C."/>
            <person name="Hurst T.E."/>
            <person name="Snieckus V."/>
            <person name="Foster L.J."/>
            <person name="Eltis L.D."/>
        </authorList>
    </citation>
    <scope>FUNCTION</scope>
    <scope>PATHWAY</scope>
    <scope>DISRUPTION PHENOTYPE</scope>
    <source>
        <strain>Erdman</strain>
    </source>
</reference>
<reference evidence="5" key="4">
    <citation type="journal article" date="2018" name="Proc. Natl. Acad. Sci. U.S.A.">
        <title>IpdAB, a virulence factor in Mycobacterium tuberculosis, is a cholesterol ring-cleaving hydrolase.</title>
        <authorList>
            <person name="Crowe A.M."/>
            <person name="Workman S.D."/>
            <person name="Watanabe N."/>
            <person name="Worrall L.J."/>
            <person name="Strynadka N.C.J."/>
            <person name="Eltis L.D."/>
        </authorList>
    </citation>
    <scope>X-RAY CRYSTALLOGRAPHY (2.10 ANGSTROMS) IN COMPLEX WITH IPDB</scope>
    <scope>FUNCTION</scope>
    <scope>CATALYTIC ACTIVITY</scope>
    <scope>SUBUNIT</scope>
</reference>
<keyword id="KW-0002">3D-structure</keyword>
<keyword id="KW-0153">Cholesterol metabolism</keyword>
<keyword id="KW-0443">Lipid metabolism</keyword>
<keyword id="KW-0456">Lyase</keyword>
<keyword id="KW-1185">Reference proteome</keyword>
<keyword id="KW-0753">Steroid metabolism</keyword>
<keyword id="KW-1207">Sterol metabolism</keyword>
<organism>
    <name type="scientific">Mycobacterium tuberculosis (strain ATCC 25618 / H37Rv)</name>
    <dbReference type="NCBI Taxonomy" id="83332"/>
    <lineage>
        <taxon>Bacteria</taxon>
        <taxon>Bacillati</taxon>
        <taxon>Actinomycetota</taxon>
        <taxon>Actinomycetes</taxon>
        <taxon>Mycobacteriales</taxon>
        <taxon>Mycobacteriaceae</taxon>
        <taxon>Mycobacterium</taxon>
        <taxon>Mycobacterium tuberculosis complex</taxon>
    </lineage>
</organism>
<proteinExistence type="evidence at protein level"/>